<proteinExistence type="inferred from homology"/>
<gene>
    <name evidence="1" type="primary">rpsD</name>
    <name type="ordered locus">Dgeo_1841</name>
</gene>
<accession>Q1IX98</accession>
<comment type="function">
    <text evidence="1">One of the primary rRNA binding proteins, it binds directly to 16S rRNA where it nucleates assembly of the body of the 30S subunit.</text>
</comment>
<comment type="function">
    <text evidence="1">With S5 and S12 plays an important role in translational accuracy.</text>
</comment>
<comment type="subunit">
    <text evidence="1">Part of the 30S ribosomal subunit. Contacts protein S5. The interaction surface between S4 and S5 is involved in control of translational fidelity.</text>
</comment>
<comment type="similarity">
    <text evidence="1">Belongs to the universal ribosomal protein uS4 family.</text>
</comment>
<sequence>MGRFRGSITKLSRREGINLAETEKVQKYLDRRPYAPGQHGQRRGRGRPSDYSVRLREKQKLARLYGVNEKQFRNLFEEAANVPGVTGTVFLQLLERRLDNVVFRMGFASTRRQARQFVGHGHILVNGKRVDIPSYRVRIGDEISVAEGSRSMGFIQENMEAQKRRRVSPWIELNPDTFTGTFVRLPAREDLALPINENFIIEYYSR</sequence>
<reference key="1">
    <citation type="submission" date="2006-04" db="EMBL/GenBank/DDBJ databases">
        <title>Complete sequence of chromosome of Deinococcus geothermalis DSM 11300.</title>
        <authorList>
            <person name="Copeland A."/>
            <person name="Lucas S."/>
            <person name="Lapidus A."/>
            <person name="Barry K."/>
            <person name="Detter J.C."/>
            <person name="Glavina del Rio T."/>
            <person name="Hammon N."/>
            <person name="Israni S."/>
            <person name="Dalin E."/>
            <person name="Tice H."/>
            <person name="Pitluck S."/>
            <person name="Brettin T."/>
            <person name="Bruce D."/>
            <person name="Han C."/>
            <person name="Tapia R."/>
            <person name="Saunders E."/>
            <person name="Gilna P."/>
            <person name="Schmutz J."/>
            <person name="Larimer F."/>
            <person name="Land M."/>
            <person name="Hauser L."/>
            <person name="Kyrpides N."/>
            <person name="Kim E."/>
            <person name="Daly M.J."/>
            <person name="Fredrickson J.K."/>
            <person name="Makarova K.S."/>
            <person name="Gaidamakova E.K."/>
            <person name="Zhai M."/>
            <person name="Richardson P."/>
        </authorList>
    </citation>
    <scope>NUCLEOTIDE SEQUENCE [LARGE SCALE GENOMIC DNA]</scope>
    <source>
        <strain>DSM 11300 / CIP 105573 / AG-3a</strain>
    </source>
</reference>
<protein>
    <recommendedName>
        <fullName evidence="1">Small ribosomal subunit protein uS4</fullName>
    </recommendedName>
    <alternativeName>
        <fullName evidence="3">30S ribosomal protein S4</fullName>
    </alternativeName>
</protein>
<organism>
    <name type="scientific">Deinococcus geothermalis (strain DSM 11300 / CIP 105573 / AG-3a)</name>
    <dbReference type="NCBI Taxonomy" id="319795"/>
    <lineage>
        <taxon>Bacteria</taxon>
        <taxon>Thermotogati</taxon>
        <taxon>Deinococcota</taxon>
        <taxon>Deinococci</taxon>
        <taxon>Deinococcales</taxon>
        <taxon>Deinococcaceae</taxon>
        <taxon>Deinococcus</taxon>
    </lineage>
</organism>
<keyword id="KW-0687">Ribonucleoprotein</keyword>
<keyword id="KW-0689">Ribosomal protein</keyword>
<keyword id="KW-0694">RNA-binding</keyword>
<keyword id="KW-0699">rRNA-binding</keyword>
<dbReference type="EMBL" id="CP000359">
    <property type="protein sequence ID" value="ABF46136.1"/>
    <property type="molecule type" value="Genomic_DNA"/>
</dbReference>
<dbReference type="RefSeq" id="WP_011530966.1">
    <property type="nucleotide sequence ID" value="NC_008025.1"/>
</dbReference>
<dbReference type="SMR" id="Q1IX98"/>
<dbReference type="STRING" id="319795.Dgeo_1841"/>
<dbReference type="KEGG" id="dge:Dgeo_1841"/>
<dbReference type="eggNOG" id="COG0522">
    <property type="taxonomic scope" value="Bacteria"/>
</dbReference>
<dbReference type="HOGENOM" id="CLU_092403_0_1_0"/>
<dbReference type="Proteomes" id="UP000002431">
    <property type="component" value="Chromosome"/>
</dbReference>
<dbReference type="GO" id="GO:0015935">
    <property type="term" value="C:small ribosomal subunit"/>
    <property type="evidence" value="ECO:0007669"/>
    <property type="project" value="InterPro"/>
</dbReference>
<dbReference type="GO" id="GO:0019843">
    <property type="term" value="F:rRNA binding"/>
    <property type="evidence" value="ECO:0007669"/>
    <property type="project" value="UniProtKB-UniRule"/>
</dbReference>
<dbReference type="GO" id="GO:0003735">
    <property type="term" value="F:structural constituent of ribosome"/>
    <property type="evidence" value="ECO:0007669"/>
    <property type="project" value="InterPro"/>
</dbReference>
<dbReference type="GO" id="GO:0042274">
    <property type="term" value="P:ribosomal small subunit biogenesis"/>
    <property type="evidence" value="ECO:0007669"/>
    <property type="project" value="TreeGrafter"/>
</dbReference>
<dbReference type="GO" id="GO:0006412">
    <property type="term" value="P:translation"/>
    <property type="evidence" value="ECO:0007669"/>
    <property type="project" value="UniProtKB-UniRule"/>
</dbReference>
<dbReference type="CDD" id="cd00165">
    <property type="entry name" value="S4"/>
    <property type="match status" value="1"/>
</dbReference>
<dbReference type="FunFam" id="3.10.290.10:FF:000001">
    <property type="entry name" value="30S ribosomal protein S4"/>
    <property type="match status" value="1"/>
</dbReference>
<dbReference type="Gene3D" id="1.10.1050.10">
    <property type="entry name" value="Ribosomal Protein S4 Delta 41, Chain A, domain 1"/>
    <property type="match status" value="1"/>
</dbReference>
<dbReference type="Gene3D" id="3.10.290.10">
    <property type="entry name" value="RNA-binding S4 domain"/>
    <property type="match status" value="1"/>
</dbReference>
<dbReference type="HAMAP" id="MF_01306_B">
    <property type="entry name" value="Ribosomal_uS4_B"/>
    <property type="match status" value="1"/>
</dbReference>
<dbReference type="InterPro" id="IPR022801">
    <property type="entry name" value="Ribosomal_uS4"/>
</dbReference>
<dbReference type="InterPro" id="IPR005709">
    <property type="entry name" value="Ribosomal_uS4_bac-type"/>
</dbReference>
<dbReference type="InterPro" id="IPR018079">
    <property type="entry name" value="Ribosomal_uS4_CS"/>
</dbReference>
<dbReference type="InterPro" id="IPR001912">
    <property type="entry name" value="Ribosomal_uS4_N"/>
</dbReference>
<dbReference type="InterPro" id="IPR002942">
    <property type="entry name" value="S4_RNA-bd"/>
</dbReference>
<dbReference type="InterPro" id="IPR036986">
    <property type="entry name" value="S4_RNA-bd_sf"/>
</dbReference>
<dbReference type="NCBIfam" id="NF003717">
    <property type="entry name" value="PRK05327.1"/>
    <property type="match status" value="1"/>
</dbReference>
<dbReference type="NCBIfam" id="TIGR01017">
    <property type="entry name" value="rpsD_bact"/>
    <property type="match status" value="1"/>
</dbReference>
<dbReference type="PANTHER" id="PTHR11831">
    <property type="entry name" value="30S 40S RIBOSOMAL PROTEIN"/>
    <property type="match status" value="1"/>
</dbReference>
<dbReference type="PANTHER" id="PTHR11831:SF4">
    <property type="entry name" value="SMALL RIBOSOMAL SUBUNIT PROTEIN US4M"/>
    <property type="match status" value="1"/>
</dbReference>
<dbReference type="Pfam" id="PF00163">
    <property type="entry name" value="Ribosomal_S4"/>
    <property type="match status" value="1"/>
</dbReference>
<dbReference type="Pfam" id="PF01479">
    <property type="entry name" value="S4"/>
    <property type="match status" value="1"/>
</dbReference>
<dbReference type="SMART" id="SM01390">
    <property type="entry name" value="Ribosomal_S4"/>
    <property type="match status" value="1"/>
</dbReference>
<dbReference type="SMART" id="SM00363">
    <property type="entry name" value="S4"/>
    <property type="match status" value="1"/>
</dbReference>
<dbReference type="SUPFAM" id="SSF55174">
    <property type="entry name" value="Alpha-L RNA-binding motif"/>
    <property type="match status" value="1"/>
</dbReference>
<dbReference type="PROSITE" id="PS00632">
    <property type="entry name" value="RIBOSOMAL_S4"/>
    <property type="match status" value="1"/>
</dbReference>
<dbReference type="PROSITE" id="PS50889">
    <property type="entry name" value="S4"/>
    <property type="match status" value="1"/>
</dbReference>
<evidence type="ECO:0000255" key="1">
    <source>
        <dbReference type="HAMAP-Rule" id="MF_01306"/>
    </source>
</evidence>
<evidence type="ECO:0000256" key="2">
    <source>
        <dbReference type="SAM" id="MobiDB-lite"/>
    </source>
</evidence>
<evidence type="ECO:0000305" key="3"/>
<feature type="chain" id="PRO_0000293269" description="Small ribosomal subunit protein uS4">
    <location>
        <begin position="1"/>
        <end position="206"/>
    </location>
</feature>
<feature type="domain" description="S4 RNA-binding" evidence="1">
    <location>
        <begin position="96"/>
        <end position="171"/>
    </location>
</feature>
<feature type="region of interest" description="Disordered" evidence="2">
    <location>
        <begin position="28"/>
        <end position="52"/>
    </location>
</feature>
<name>RS4_DEIGD</name>